<proteinExistence type="inferred from homology"/>
<organismHost>
    <name type="scientific">Homo sapiens</name>
    <name type="common">Human</name>
    <dbReference type="NCBI Taxonomy" id="9606"/>
</organismHost>
<evidence type="ECO:0000305" key="1"/>
<sequence length="1156" mass="132426">MDQRLGYKFLVPDPKAGVFYRPLHFQYVSYSNFILHRLHEILTVKRPLLSFKNNTERIMIEISNVKVTPPDYSPIIASIKGKSYDALATFTVNIFKEVMTKEGISITKISSYEGKDSHLIKIPLLIGYGNKNPLDTAKYLVPNVIGGVFINKQSVEKVGINLVEKITTWPKFRVVKPNSFTFSFSSVSPPNVLPTRYRHYKISLDISQLEALNISSTKTFITVNIVLLSQYLSRVSLEFIRRSLSYDMPPEVVYLVNAIIDSAKRITESITDFNIDTYINDLVEAEHIKQKSQLTINEFKYEMLHNFLPHMNYTPDQLKGFYMISLLRKFLYCIYHTSRYPDRDSMVCHRILTYGKYFETLAHDELENYIGNIRNDIMNNHKNRGTYAVNIHVLTTPGLNHAFSSLLSGKFKKSDGSYRTHPHYSWMQNISIPRSVGFYPDQVKISKMFSVRKYHPSQYLYFCSSDVPERGPQVGLVSQLSVLSSITNILTSEYLDLEKKICEYIRSYYKDDISYFETGFPITIENALVASLNPNMICDFVTDFRRRKRMGFFGNLEVGITLVRDHMNEIRINIGAGRLVRPFLVVDNGELMMDVCPELESRLDDMTFSDIQKEFPHVIEMVDIEQFTFSNVCESVQKFRMMSKDERKQYDLCDFPAEFRDGYVASSLVGINHNSGPRAILGCAQAKQAISCLSSDIRNKIDNGIHLMYPERPIVISKALETSKIAANCFGQHVTIALMSYKGINQEDGIIIKKQFIQRGGLDIVTAKKHQVEIPLENFNNKERDRSNAYSKLESNGLVRLNAFLESGDAIARNISSRTLEDDFARDNQISFDVSEKYTDMYKSRVERVQVELTDKVKVRVLTMKERRPILGDKFTTRTSQKGTVAYIADETELPYDENGITPDVIINSTSIFSRKTISMLIEVILTAAYSAKPYNNKGENRPVCFPSSNETSIDTYMQFAKQCYEHSNPKLSDEELSDKIFCEKILYDPETDKPYASKVFFGPIYYLRLRHLTQDKATVRCRGKKTKLIRQANEGRKRGGGIKFGEMERDCLIAHGAANTITEVLKDSEEDYQDVYVCENCGDIAAQIKGINTCLRCSKLNLSPLLTKIDTTHVSKVFLTQMNARGVKVKLDFERRPPSFYKPLDKVDLKPSFLV</sequence>
<dbReference type="EC" id="2.7.7.6"/>
<dbReference type="EMBL" id="U94848">
    <property type="protein sequence ID" value="AAB96526.1"/>
    <property type="molecule type" value="Genomic_DNA"/>
</dbReference>
<dbReference type="EMBL" id="AY603355">
    <property type="protein sequence ID" value="AAT10534.1"/>
    <property type="molecule type" value="Genomic_DNA"/>
</dbReference>
<dbReference type="PIR" id="T37411">
    <property type="entry name" value="T37411"/>
</dbReference>
<dbReference type="SMR" id="O57230"/>
<dbReference type="Proteomes" id="UP000159908">
    <property type="component" value="Segment"/>
</dbReference>
<dbReference type="Proteomes" id="UP000172909">
    <property type="component" value="Segment"/>
</dbReference>
<dbReference type="GO" id="GO:0000428">
    <property type="term" value="C:DNA-directed RNA polymerase complex"/>
    <property type="evidence" value="ECO:0007669"/>
    <property type="project" value="UniProtKB-KW"/>
</dbReference>
<dbReference type="GO" id="GO:0044423">
    <property type="term" value="C:virion component"/>
    <property type="evidence" value="ECO:0007669"/>
    <property type="project" value="UniProtKB-KW"/>
</dbReference>
<dbReference type="GO" id="GO:0003677">
    <property type="term" value="F:DNA binding"/>
    <property type="evidence" value="ECO:0007669"/>
    <property type="project" value="InterPro"/>
</dbReference>
<dbReference type="GO" id="GO:0003899">
    <property type="term" value="F:DNA-directed RNA polymerase activity"/>
    <property type="evidence" value="ECO:0007669"/>
    <property type="project" value="UniProtKB-EC"/>
</dbReference>
<dbReference type="GO" id="GO:0046872">
    <property type="term" value="F:metal ion binding"/>
    <property type="evidence" value="ECO:0007669"/>
    <property type="project" value="UniProtKB-KW"/>
</dbReference>
<dbReference type="GO" id="GO:0032549">
    <property type="term" value="F:ribonucleoside binding"/>
    <property type="evidence" value="ECO:0007669"/>
    <property type="project" value="InterPro"/>
</dbReference>
<dbReference type="GO" id="GO:0006351">
    <property type="term" value="P:DNA-templated transcription"/>
    <property type="evidence" value="ECO:0007669"/>
    <property type="project" value="InterPro"/>
</dbReference>
<dbReference type="Gene3D" id="2.40.50.150">
    <property type="match status" value="1"/>
</dbReference>
<dbReference type="Gene3D" id="3.90.1100.10">
    <property type="match status" value="2"/>
</dbReference>
<dbReference type="Gene3D" id="2.40.270.10">
    <property type="entry name" value="DNA-directed RNA polymerase, subunit 2, domain 6"/>
    <property type="match status" value="1"/>
</dbReference>
<dbReference type="Gene3D" id="3.90.1800.10">
    <property type="entry name" value="RNA polymerase alpha subunit dimerisation domain"/>
    <property type="match status" value="1"/>
</dbReference>
<dbReference type="InterPro" id="IPR015712">
    <property type="entry name" value="DNA-dir_RNA_pol_su2"/>
</dbReference>
<dbReference type="InterPro" id="IPR007120">
    <property type="entry name" value="DNA-dir_RNAP_su2_dom"/>
</dbReference>
<dbReference type="InterPro" id="IPR037033">
    <property type="entry name" value="DNA-dir_RNAP_su2_hyb_sf"/>
</dbReference>
<dbReference type="InterPro" id="IPR024390">
    <property type="entry name" value="RNA_pol_132_poxvirus"/>
</dbReference>
<dbReference type="InterPro" id="IPR007121">
    <property type="entry name" value="RNA_pol_bsu_CS"/>
</dbReference>
<dbReference type="InterPro" id="IPR007645">
    <property type="entry name" value="RNA_pol_Rpb2_3"/>
</dbReference>
<dbReference type="InterPro" id="IPR007647">
    <property type="entry name" value="RNA_pol_Rpb2_5"/>
</dbReference>
<dbReference type="InterPro" id="IPR007641">
    <property type="entry name" value="RNA_pol_Rpb2_7"/>
</dbReference>
<dbReference type="InterPro" id="IPR014724">
    <property type="entry name" value="RNA_pol_RPB2_OB-fold"/>
</dbReference>
<dbReference type="PANTHER" id="PTHR20856">
    <property type="entry name" value="DNA-DIRECTED RNA POLYMERASE I SUBUNIT 2"/>
    <property type="match status" value="1"/>
</dbReference>
<dbReference type="Pfam" id="PF04565">
    <property type="entry name" value="RNA_pol_Rpb2_3"/>
    <property type="match status" value="1"/>
</dbReference>
<dbReference type="Pfam" id="PF04567">
    <property type="entry name" value="RNA_pol_Rpb2_5"/>
    <property type="match status" value="1"/>
</dbReference>
<dbReference type="Pfam" id="PF00562">
    <property type="entry name" value="RNA_pol_Rpb2_6"/>
    <property type="match status" value="1"/>
</dbReference>
<dbReference type="Pfam" id="PF04560">
    <property type="entry name" value="RNA_pol_Rpb2_7"/>
    <property type="match status" value="1"/>
</dbReference>
<dbReference type="Pfam" id="PF12415">
    <property type="entry name" value="rpo132"/>
    <property type="match status" value="1"/>
</dbReference>
<dbReference type="SUPFAM" id="SSF64484">
    <property type="entry name" value="beta and beta-prime subunits of DNA dependent RNA-polymerase"/>
    <property type="match status" value="1"/>
</dbReference>
<dbReference type="PROSITE" id="PS01166">
    <property type="entry name" value="RNA_POL_BETA"/>
    <property type="match status" value="1"/>
</dbReference>
<comment type="function">
    <text>Part of the DNA-dependent RNA polymerase which catalyzes the transcription of viral DNA into RNA using the four ribonucleoside triphosphates as substrates. Responsible for the transcription of early, intermediate and late genes. DNA-dependent RNA polymerase associates with the early transcription factor (ETF), itself composed of D6 and A7, thereby allowing the early genes transcription. Late transcription, and probably also intermediate transcription, require newly synthesized RNA polymerase.</text>
</comment>
<comment type="catalytic activity">
    <reaction>
        <text>RNA(n) + a ribonucleoside 5'-triphosphate = RNA(n+1) + diphosphate</text>
        <dbReference type="Rhea" id="RHEA:21248"/>
        <dbReference type="Rhea" id="RHEA-COMP:14527"/>
        <dbReference type="Rhea" id="RHEA-COMP:17342"/>
        <dbReference type="ChEBI" id="CHEBI:33019"/>
        <dbReference type="ChEBI" id="CHEBI:61557"/>
        <dbReference type="ChEBI" id="CHEBI:140395"/>
        <dbReference type="EC" id="2.7.7.6"/>
    </reaction>
</comment>
<comment type="subunit">
    <text>The DNA-dependent RNA polymerase used for intermediate and late genes expression consists of eight subunits 147 kDa, 133 kDa, 35 kDa, 30 kDa, 22 kDa, 19 kDa, 18 kDa and 7 kDa totalling more than 500 kDa in mass. The same holoenzyme, with the addition of the transcription-specificity factor RAP94, is used for early gene expression.</text>
</comment>
<comment type="subcellular location">
    <subcellularLocation>
        <location evidence="1">Virion</location>
    </subcellularLocation>
    <text>All the enzymes and other proteins required to synthesize early mRNAs are packaged within the virion core along with the DNA genome. This is necessary because viral early mRNAs are synthesized within minutes after virus entry into the cell and are extruded through pores in the core particle.</text>
</comment>
<comment type="similarity">
    <text evidence="1">Belongs to the RNA polymerase beta chain family.</text>
</comment>
<reference key="1">
    <citation type="journal article" date="1998" name="Virology">
        <title>The complete genomic sequence of the modified vaccinia Ankara strain: comparison with other orthopoxviruses.</title>
        <authorList>
            <person name="Antoine G."/>
            <person name="Scheiflinger F."/>
            <person name="Dorner F."/>
            <person name="Falkner F.G."/>
        </authorList>
    </citation>
    <scope>NUCLEOTIDE SEQUENCE [LARGE SCALE GENOMIC DNA]</scope>
</reference>
<reference key="2">
    <citation type="submission" date="2004-04" db="EMBL/GenBank/DDBJ databases">
        <authorList>
            <person name="Esposito J.J."/>
            <person name="Frace M."/>
            <person name="Sammons S.A."/>
            <person name="Olsen-Rasmussen M.S."/>
            <person name="Osborne J."/>
            <person name="Khristova M."/>
            <person name="Wohlhueter R.M."/>
        </authorList>
    </citation>
    <scope>NUCLEOTIDE SEQUENCE [LARGE SCALE GENOMIC DNA]</scope>
    <source>
        <strain>Isolate Acambis 3000</strain>
    </source>
</reference>
<reference key="3">
    <citation type="journal article" date="2003" name="J. Gen. Virol.">
        <title>Vaccinia virus transcription.</title>
        <authorList>
            <person name="Broyles S.S."/>
        </authorList>
    </citation>
    <scope>REVIEW</scope>
</reference>
<feature type="chain" id="PRO_0000048058" description="DNA-directed RNA polymerase 133 kDa polypeptide">
    <location>
        <begin position="1"/>
        <end position="1156"/>
    </location>
</feature>
<name>RP132_VACCA</name>
<protein>
    <recommendedName>
        <fullName>DNA-directed RNA polymerase 133 kDa polypeptide</fullName>
        <ecNumber>2.7.7.6</ecNumber>
    </recommendedName>
</protein>
<keyword id="KW-0240">DNA-directed RNA polymerase</keyword>
<keyword id="KW-0479">Metal-binding</keyword>
<keyword id="KW-0548">Nucleotidyltransferase</keyword>
<keyword id="KW-0804">Transcription</keyword>
<keyword id="KW-0808">Transferase</keyword>
<keyword id="KW-0946">Virion</keyword>
<gene>
    <name type="primary">RPO132</name>
    <name type="ordered locus">MVA135R</name>
    <name type="ordered locus">ACAM3000_MVA_135</name>
</gene>
<accession>O57230</accession>
<organism>
    <name type="scientific">Vaccinia virus (strain Ankara)</name>
    <name type="common">VACV</name>
    <dbReference type="NCBI Taxonomy" id="126794"/>
    <lineage>
        <taxon>Viruses</taxon>
        <taxon>Varidnaviria</taxon>
        <taxon>Bamfordvirae</taxon>
        <taxon>Nucleocytoviricota</taxon>
        <taxon>Pokkesviricetes</taxon>
        <taxon>Chitovirales</taxon>
        <taxon>Poxviridae</taxon>
        <taxon>Chordopoxvirinae</taxon>
        <taxon>Orthopoxvirus</taxon>
        <taxon>Vaccinia virus</taxon>
    </lineage>
</organism>